<keyword id="KW-0002">3D-structure</keyword>
<keyword id="KW-0456">Lyase</keyword>
<keyword id="KW-0521">NADP</keyword>
<keyword id="KW-0547">Nucleotide-binding</keyword>
<keyword id="KW-1185">Reference proteome</keyword>
<dbReference type="EC" id="4.2.1.115"/>
<dbReference type="EMBL" id="AE000511">
    <property type="protein sequence ID" value="AAD07887.1"/>
    <property type="molecule type" value="Genomic_DNA"/>
</dbReference>
<dbReference type="PIR" id="H64624">
    <property type="entry name" value="H64624"/>
</dbReference>
<dbReference type="RefSeq" id="NP_207633.1">
    <property type="nucleotide sequence ID" value="NC_000915.1"/>
</dbReference>
<dbReference type="PDB" id="2GN4">
    <property type="method" value="X-ray"/>
    <property type="resolution" value="1.90 A"/>
    <property type="chains" value="A/B=1-333"/>
</dbReference>
<dbReference type="PDB" id="2GN6">
    <property type="method" value="X-ray"/>
    <property type="resolution" value="2.70 A"/>
    <property type="chains" value="A/B=1-333"/>
</dbReference>
<dbReference type="PDB" id="2GN8">
    <property type="method" value="X-ray"/>
    <property type="resolution" value="2.10 A"/>
    <property type="chains" value="A/B=1-333"/>
</dbReference>
<dbReference type="PDB" id="2GN9">
    <property type="method" value="X-ray"/>
    <property type="resolution" value="2.80 A"/>
    <property type="chains" value="A/B=1-333"/>
</dbReference>
<dbReference type="PDB" id="2GNA">
    <property type="method" value="X-ray"/>
    <property type="resolution" value="2.60 A"/>
    <property type="chains" value="A/B=1-333"/>
</dbReference>
<dbReference type="PDBsum" id="2GN4"/>
<dbReference type="PDBsum" id="2GN6"/>
<dbReference type="PDBsum" id="2GN8"/>
<dbReference type="PDBsum" id="2GN9"/>
<dbReference type="PDBsum" id="2GNA"/>
<dbReference type="SMR" id="O25511"/>
<dbReference type="IntAct" id="O25511">
    <property type="interactions" value="1"/>
</dbReference>
<dbReference type="STRING" id="85962.HP_0840"/>
<dbReference type="PaxDb" id="85962-C694_04305"/>
<dbReference type="EnsemblBacteria" id="AAD07887">
    <property type="protein sequence ID" value="AAD07887"/>
    <property type="gene ID" value="HP_0840"/>
</dbReference>
<dbReference type="KEGG" id="hpy:HP_0840"/>
<dbReference type="PATRIC" id="fig|85962.8.peg.874"/>
<dbReference type="eggNOG" id="COG1086">
    <property type="taxonomic scope" value="Bacteria"/>
</dbReference>
<dbReference type="InParanoid" id="O25511"/>
<dbReference type="OrthoDB" id="9769113at2"/>
<dbReference type="PhylomeDB" id="O25511"/>
<dbReference type="BioCyc" id="MetaCyc:HP0840-MONOMER"/>
<dbReference type="SABIO-RK" id="O25511"/>
<dbReference type="EvolutionaryTrace" id="O25511"/>
<dbReference type="Proteomes" id="UP000000429">
    <property type="component" value="Chromosome"/>
</dbReference>
<dbReference type="GO" id="GO:0016829">
    <property type="term" value="F:lyase activity"/>
    <property type="evidence" value="ECO:0007669"/>
    <property type="project" value="UniProtKB-KW"/>
</dbReference>
<dbReference type="GO" id="GO:0000166">
    <property type="term" value="F:nucleotide binding"/>
    <property type="evidence" value="ECO:0007669"/>
    <property type="project" value="UniProtKB-KW"/>
</dbReference>
<dbReference type="CDD" id="cd05237">
    <property type="entry name" value="UDP_invert_4-6DH_SDR_e"/>
    <property type="match status" value="1"/>
</dbReference>
<dbReference type="Gene3D" id="3.40.50.720">
    <property type="entry name" value="NAD(P)-binding Rossmann-like Domain"/>
    <property type="match status" value="1"/>
</dbReference>
<dbReference type="InterPro" id="IPR036291">
    <property type="entry name" value="NAD(P)-bd_dom_sf"/>
</dbReference>
<dbReference type="InterPro" id="IPR003869">
    <property type="entry name" value="Polysac_CapD-like"/>
</dbReference>
<dbReference type="InterPro" id="IPR051203">
    <property type="entry name" value="Polysaccharide_Synthase-Rel"/>
</dbReference>
<dbReference type="InterPro" id="IPR020025">
    <property type="entry name" value="PseB"/>
</dbReference>
<dbReference type="NCBIfam" id="TIGR03589">
    <property type="entry name" value="PseB"/>
    <property type="match status" value="1"/>
</dbReference>
<dbReference type="PANTHER" id="PTHR43318">
    <property type="entry name" value="UDP-N-ACETYLGLUCOSAMINE 4,6-DEHYDRATASE"/>
    <property type="match status" value="1"/>
</dbReference>
<dbReference type="PANTHER" id="PTHR43318:SF2">
    <property type="entry name" value="UDP-N-ACETYLGLUCOSAMINE 4,6-DEHYDRATASE (INVERTING)"/>
    <property type="match status" value="1"/>
</dbReference>
<dbReference type="Pfam" id="PF02719">
    <property type="entry name" value="Polysacc_synt_2"/>
    <property type="match status" value="1"/>
</dbReference>
<dbReference type="SUPFAM" id="SSF51735">
    <property type="entry name" value="NAD(P)-binding Rossmann-fold domains"/>
    <property type="match status" value="1"/>
</dbReference>
<comment type="function">
    <text evidence="2">Catalyzes the first step in the biosynthesis of pseudaminic acid, a sialic-acid-like sugar that is used to modify flagellin. Has both C6 dehydratase and C5 epimerase activities that result in the production of both UDP-2-acetamido-2,6-dideoxy-beta-L-arabino-4-hexulose and UDP-2-acetamido-2,6-dideoxy-alpha-D-xylo-4-hexulose.</text>
</comment>
<comment type="catalytic activity">
    <reaction evidence="2">
        <text>UDP-N-acetyl-alpha-D-glucosamine = UDP-2-acetamido-2,6-dideoxy-beta-L-arabino-hex-4-ulose + H2O</text>
        <dbReference type="Rhea" id="RHEA:26111"/>
        <dbReference type="ChEBI" id="CHEBI:15377"/>
        <dbReference type="ChEBI" id="CHEBI:57705"/>
        <dbReference type="ChEBI" id="CHEBI:60101"/>
        <dbReference type="EC" id="4.2.1.115"/>
    </reaction>
</comment>
<comment type="cofactor">
    <cofactor evidence="3">
        <name>NADP(+)</name>
        <dbReference type="ChEBI" id="CHEBI:58349"/>
    </cofactor>
</comment>
<comment type="biophysicochemical properties">
    <kinetics>
        <KM evidence="1">159 uM for UDP-GlcNAc</KM>
    </kinetics>
</comment>
<comment type="subunit">
    <text evidence="3">Homohexamer.</text>
</comment>
<comment type="similarity">
    <text evidence="4">Belongs to the polysaccharide synthase family.</text>
</comment>
<organism>
    <name type="scientific">Helicobacter pylori (strain ATCC 700392 / 26695)</name>
    <name type="common">Campylobacter pylori</name>
    <dbReference type="NCBI Taxonomy" id="85962"/>
    <lineage>
        <taxon>Bacteria</taxon>
        <taxon>Pseudomonadati</taxon>
        <taxon>Campylobacterota</taxon>
        <taxon>Epsilonproteobacteria</taxon>
        <taxon>Campylobacterales</taxon>
        <taxon>Helicobacteraceae</taxon>
        <taxon>Helicobacter</taxon>
    </lineage>
</organism>
<reference key="1">
    <citation type="journal article" date="1997" name="Nature">
        <title>The complete genome sequence of the gastric pathogen Helicobacter pylori.</title>
        <authorList>
            <person name="Tomb J.-F."/>
            <person name="White O."/>
            <person name="Kerlavage A.R."/>
            <person name="Clayton R.A."/>
            <person name="Sutton G.G."/>
            <person name="Fleischmann R.D."/>
            <person name="Ketchum K.A."/>
            <person name="Klenk H.-P."/>
            <person name="Gill S.R."/>
            <person name="Dougherty B.A."/>
            <person name="Nelson K.E."/>
            <person name="Quackenbush J."/>
            <person name="Zhou L."/>
            <person name="Kirkness E.F."/>
            <person name="Peterson S.N."/>
            <person name="Loftus B.J."/>
            <person name="Richardson D.L."/>
            <person name="Dodson R.J."/>
            <person name="Khalak H.G."/>
            <person name="Glodek A."/>
            <person name="McKenney K."/>
            <person name="FitzGerald L.M."/>
            <person name="Lee N."/>
            <person name="Adams M.D."/>
            <person name="Hickey E.K."/>
            <person name="Berg D.E."/>
            <person name="Gocayne J.D."/>
            <person name="Utterback T.R."/>
            <person name="Peterson J.D."/>
            <person name="Kelley J.M."/>
            <person name="Cotton M.D."/>
            <person name="Weidman J.F."/>
            <person name="Fujii C."/>
            <person name="Bowman C."/>
            <person name="Watthey L."/>
            <person name="Wallin E."/>
            <person name="Hayes W.S."/>
            <person name="Borodovsky M."/>
            <person name="Karp P.D."/>
            <person name="Smith H.O."/>
            <person name="Fraser C.M."/>
            <person name="Venter J.C."/>
        </authorList>
    </citation>
    <scope>NUCLEOTIDE SEQUENCE [LARGE SCALE GENOMIC DNA]</scope>
    <source>
        <strain>ATCC 700392 / 26695</strain>
    </source>
</reference>
<reference key="2">
    <citation type="journal article" date="2000" name="J. Biol. Chem.">
        <title>FlaA1, a new bifunctional UDP-GlcNAc C6 Dehydratase/ C4 reductase from Helicobacter pylori.</title>
        <authorList>
            <person name="Creuzenet C."/>
            <person name="Schur M.J."/>
            <person name="Li J."/>
            <person name="Wakarchuk W.W."/>
            <person name="Lam J.S."/>
        </authorList>
    </citation>
    <scope>BIOPHYSICOCHEMICAL PROPERTIES</scope>
</reference>
<reference key="3">
    <citation type="journal article" date="2003" name="Mol. Microbiol.">
        <title>Structural, genetic and functional characterization of the flagellin glycosylation process in Helicobacter pylori.</title>
        <authorList>
            <person name="Schirm M."/>
            <person name="Soo E.C."/>
            <person name="Aubry A.J."/>
            <person name="Austin J."/>
            <person name="Thibault P."/>
            <person name="Logan S.M."/>
        </authorList>
    </citation>
    <scope>IDENTIFICATION</scope>
</reference>
<reference key="4">
    <citation type="journal article" date="2006" name="Glycobiology">
        <title>Elucidation of the CMP-pseudaminic acid pathway in Helicobacter pylori: synthesis from UDP-N-acetylglucosamine by a single enzymatic reaction.</title>
        <authorList>
            <person name="Schoenhofen I.C."/>
            <person name="McNally D.J."/>
            <person name="Brisson J.R."/>
            <person name="Logan S.M."/>
        </authorList>
    </citation>
    <scope>PATHWAY</scope>
    <source>
        <strain>ATCC 700392 / 26695</strain>
    </source>
</reference>
<reference key="5">
    <citation type="journal article" date="2006" name="J. Biol. Chem.">
        <title>Functional characterization of dehydratase/aminotransferase pairs from Helicobacter and Campylobacter: enzymes distinguishing the pseudaminic acid and bacillosamine biosynthetic pathways.</title>
        <authorList>
            <person name="Schoenhofen I.C."/>
            <person name="McNally D.J."/>
            <person name="Vinogradov E."/>
            <person name="Whitfield D."/>
            <person name="Young N.M."/>
            <person name="Dick S."/>
            <person name="Wakarchuk W.W."/>
            <person name="Brisson J.R."/>
            <person name="Logan S.M."/>
        </authorList>
    </citation>
    <scope>FUNCTION</scope>
    <scope>CATALYTIC ACTIVITY</scope>
    <source>
        <strain>ATCC 700392 / 26695</strain>
    </source>
</reference>
<reference key="6">
    <citation type="journal article" date="2006" name="J. Biol. Chem.">
        <title>Structural studies of FlaA1 from Helicobacter pylori reveal the mechanism for inverting 4,6-dehydratase activity.</title>
        <authorList>
            <person name="Ishiyama N."/>
            <person name="Creuzenet C."/>
            <person name="Miller W.L."/>
            <person name="Demendi M."/>
            <person name="Anderson E.M."/>
            <person name="Harauz G."/>
            <person name="Lam J.S."/>
            <person name="Berghuis A.M."/>
        </authorList>
    </citation>
    <scope>X-RAY CRYSTALLOGRAPHY (1.90 ANGSTROMS) IN COMPLEX WITH NADP AND UDP-D-GALACTOPYRANOSE</scope>
    <scope>COFACTOR</scope>
    <scope>SUBUNIT</scope>
    <scope>MUTAGENESIS OF LYS-133</scope>
    <source>
        <strain>ATCC 700392 / 26695</strain>
    </source>
</reference>
<feature type="chain" id="PRO_0000418954" description="UDP-N-acetylglucosamine 4,6-dehydratase (inverting)">
    <location>
        <begin position="1"/>
        <end position="333"/>
    </location>
</feature>
<feature type="active site" evidence="4">
    <location>
        <position position="133"/>
    </location>
</feature>
<feature type="binding site" evidence="3">
    <location>
        <begin position="19"/>
        <end position="22"/>
    </location>
    <ligand>
        <name>NADP(+)</name>
        <dbReference type="ChEBI" id="CHEBI:58349"/>
    </ligand>
</feature>
<feature type="binding site" evidence="3">
    <location>
        <begin position="43"/>
        <end position="48"/>
    </location>
    <ligand>
        <name>NADP(+)</name>
        <dbReference type="ChEBI" id="CHEBI:58349"/>
    </ligand>
</feature>
<feature type="binding site" evidence="3">
    <location>
        <begin position="67"/>
        <end position="68"/>
    </location>
    <ligand>
        <name>NADP(+)</name>
        <dbReference type="ChEBI" id="CHEBI:58349"/>
    </ligand>
</feature>
<feature type="binding site" evidence="3">
    <location>
        <position position="87"/>
    </location>
    <ligand>
        <name>NADP(+)</name>
        <dbReference type="ChEBI" id="CHEBI:58349"/>
    </ligand>
</feature>
<feature type="binding site" evidence="3">
    <location>
        <position position="91"/>
    </location>
    <ligand>
        <name>NADP(+)</name>
        <dbReference type="ChEBI" id="CHEBI:58349"/>
    </ligand>
</feature>
<feature type="binding site">
    <location>
        <position position="91"/>
    </location>
    <ligand>
        <name>substrate</name>
    </ligand>
</feature>
<feature type="binding site" evidence="3">
    <location>
        <begin position="129"/>
        <end position="130"/>
    </location>
    <ligand>
        <name>NADP(+)</name>
        <dbReference type="ChEBI" id="CHEBI:58349"/>
    </ligand>
</feature>
<feature type="binding site" evidence="3">
    <location>
        <position position="141"/>
    </location>
    <ligand>
        <name>NADP(+)</name>
        <dbReference type="ChEBI" id="CHEBI:58349"/>
    </ligand>
</feature>
<feature type="binding site" evidence="3">
    <location>
        <position position="145"/>
    </location>
    <ligand>
        <name>NADP(+)</name>
        <dbReference type="ChEBI" id="CHEBI:58349"/>
    </ligand>
</feature>
<feature type="binding site">
    <location>
        <position position="173"/>
    </location>
    <ligand>
        <name>substrate</name>
    </ligand>
</feature>
<feature type="binding site" evidence="3">
    <location>
        <begin position="174"/>
        <end position="178"/>
    </location>
    <ligand>
        <name>NADP(+)</name>
        <dbReference type="ChEBI" id="CHEBI:58349"/>
    </ligand>
</feature>
<feature type="binding site">
    <location>
        <position position="181"/>
    </location>
    <ligand>
        <name>substrate</name>
    </ligand>
</feature>
<feature type="binding site">
    <location>
        <position position="199"/>
    </location>
    <ligand>
        <name>substrate</name>
    </ligand>
</feature>
<feature type="binding site">
    <location>
        <position position="258"/>
    </location>
    <ligand>
        <name>substrate</name>
    </ligand>
</feature>
<feature type="binding site">
    <location>
        <position position="261"/>
    </location>
    <ligand>
        <name>substrate</name>
    </ligand>
</feature>
<feature type="mutagenesis site" description="Loss of activity." evidence="3">
    <original>K</original>
    <variation>A</variation>
    <variation>E</variation>
    <location>
        <position position="133"/>
    </location>
</feature>
<feature type="turn" evidence="5">
    <location>
        <begin position="7"/>
        <end position="10"/>
    </location>
</feature>
<feature type="strand" evidence="5">
    <location>
        <begin position="12"/>
        <end position="16"/>
    </location>
</feature>
<feature type="turn" evidence="5">
    <location>
        <begin position="17"/>
        <end position="19"/>
    </location>
</feature>
<feature type="helix" evidence="5">
    <location>
        <begin position="21"/>
        <end position="33"/>
    </location>
</feature>
<feature type="strand" evidence="5">
    <location>
        <begin position="37"/>
        <end position="44"/>
    </location>
</feature>
<feature type="helix" evidence="5">
    <location>
        <begin position="46"/>
        <end position="56"/>
    </location>
</feature>
<feature type="strand" evidence="5">
    <location>
        <begin position="61"/>
        <end position="65"/>
    </location>
</feature>
<feature type="helix" evidence="5">
    <location>
        <begin position="71"/>
        <end position="77"/>
    </location>
</feature>
<feature type="turn" evidence="5">
    <location>
        <begin position="78"/>
        <end position="80"/>
    </location>
</feature>
<feature type="strand" evidence="5">
    <location>
        <begin position="82"/>
        <end position="86"/>
    </location>
</feature>
<feature type="helix" evidence="5">
    <location>
        <begin position="93"/>
        <end position="98"/>
    </location>
</feature>
<feature type="helix" evidence="5">
    <location>
        <begin position="100"/>
        <end position="120"/>
    </location>
</feature>
<feature type="strand" evidence="5">
    <location>
        <begin position="124"/>
        <end position="129"/>
    </location>
</feature>
<feature type="helix" evidence="5">
    <location>
        <begin position="132"/>
        <end position="134"/>
    </location>
</feature>
<feature type="helix" evidence="5">
    <location>
        <begin position="140"/>
        <end position="154"/>
    </location>
</feature>
<feature type="helix" evidence="5">
    <location>
        <begin position="155"/>
        <end position="157"/>
    </location>
</feature>
<feature type="strand" evidence="6">
    <location>
        <begin position="160"/>
        <end position="162"/>
    </location>
</feature>
<feature type="strand" evidence="5">
    <location>
        <begin position="165"/>
        <end position="169"/>
    </location>
</feature>
<feature type="helix" evidence="5">
    <location>
        <begin position="181"/>
        <end position="191"/>
    </location>
</feature>
<feature type="strand" evidence="5">
    <location>
        <begin position="196"/>
        <end position="199"/>
    </location>
</feature>
<feature type="strand" evidence="5">
    <location>
        <begin position="204"/>
        <end position="208"/>
    </location>
</feature>
<feature type="helix" evidence="5">
    <location>
        <begin position="210"/>
        <end position="223"/>
    </location>
</feature>
<feature type="strand" evidence="5">
    <location>
        <begin position="229"/>
        <end position="232"/>
    </location>
</feature>
<feature type="strand" evidence="5">
    <location>
        <begin position="236"/>
        <end position="238"/>
    </location>
</feature>
<feature type="helix" evidence="5">
    <location>
        <begin position="239"/>
        <end position="246"/>
    </location>
</feature>
<feature type="strand" evidence="5">
    <location>
        <begin position="252"/>
        <end position="254"/>
    </location>
</feature>
<feature type="strand" evidence="5">
    <location>
        <begin position="266"/>
        <end position="268"/>
    </location>
</feature>
<feature type="helix" evidence="5">
    <location>
        <begin position="270"/>
        <end position="275"/>
    </location>
</feature>
<feature type="strand" evidence="5">
    <location>
        <begin position="276"/>
        <end position="278"/>
    </location>
</feature>
<feature type="strand" evidence="5">
    <location>
        <begin position="280"/>
        <end position="285"/>
    </location>
</feature>
<feature type="strand" evidence="5">
    <location>
        <begin position="315"/>
        <end position="319"/>
    </location>
</feature>
<feature type="helix" evidence="5">
    <location>
        <begin position="326"/>
        <end position="330"/>
    </location>
</feature>
<evidence type="ECO:0000269" key="1">
    <source>
    </source>
</evidence>
<evidence type="ECO:0000269" key="2">
    <source>
    </source>
</evidence>
<evidence type="ECO:0000269" key="3">
    <source>
    </source>
</evidence>
<evidence type="ECO:0000305" key="4"/>
<evidence type="ECO:0007829" key="5">
    <source>
        <dbReference type="PDB" id="2GN4"/>
    </source>
</evidence>
<evidence type="ECO:0007829" key="6">
    <source>
        <dbReference type="PDB" id="2GNA"/>
    </source>
</evidence>
<gene>
    <name type="primary">pseB</name>
    <name type="synonym">flaA1</name>
    <name type="ordered locus">HP_0840</name>
</gene>
<protein>
    <recommendedName>
        <fullName>UDP-N-acetylglucosamine 4,6-dehydratase (inverting)</fullName>
        <ecNumber>4.2.1.115</ecNumber>
    </recommendedName>
    <alternativeName>
        <fullName>Pseudaminic acid biosynthesis protein B</fullName>
    </alternativeName>
    <alternativeName>
        <fullName>UDP-GlcNAc-inverting 4,6-dehydratase</fullName>
    </alternativeName>
</protein>
<accession>O25511</accession>
<name>PSEB_HELPY</name>
<proteinExistence type="evidence at protein level"/>
<sequence>MPNHQNMLDNQTILITGGTGSFGKCFVRKVLDTTNAKKIIVYSRDELKQSEMAMEFNDPRMRFFIGDVRDLERLNYALEGVDICIHAAALKHVPIAEYNPLECIKTNIMGASNVINACLKNAISQVIALSTDKAANPINLYGATKLCSDKLFVSANNFKGSSQTQFSVVRYGNVVGSRGSVVPFFKKLVQNKASEIPITDIRMTRFWITLDEGVSFVLKSLKRMHGGEIFVPKIPSMKMTDLAKALAPNTPTKIIGIRPGEKLHEVMIPKDESHLALEFEDFFIIQPTISFQTPKDYTLTKLHEKGQKVAPDFEYSSHNNNQWLEPDDLLKLL</sequence>